<proteinExistence type="inferred from homology"/>
<reference key="1">
    <citation type="journal article" date="1998" name="Science">
        <title>Genome sequence of an obligate intracellular pathogen of humans: Chlamydia trachomatis.</title>
        <authorList>
            <person name="Stephens R.S."/>
            <person name="Kalman S."/>
            <person name="Lammel C.J."/>
            <person name="Fan J."/>
            <person name="Marathe R."/>
            <person name="Aravind L."/>
            <person name="Mitchell W.P."/>
            <person name="Olinger L."/>
            <person name="Tatusov R.L."/>
            <person name="Zhao Q."/>
            <person name="Koonin E.V."/>
            <person name="Davis R.W."/>
        </authorList>
    </citation>
    <scope>NUCLEOTIDE SEQUENCE [LARGE SCALE GENOMIC DNA]</scope>
    <source>
        <strain>ATCC VR-885 / DSM 19411 / UW-3/Cx</strain>
    </source>
</reference>
<name>Y072_CHLTR</name>
<dbReference type="EC" id="3.4.24.-"/>
<dbReference type="EMBL" id="AE001273">
    <property type="protein sequence ID" value="AAC67663.1"/>
    <property type="molecule type" value="Genomic_DNA"/>
</dbReference>
<dbReference type="PIR" id="B71559">
    <property type="entry name" value="B71559"/>
</dbReference>
<dbReference type="RefSeq" id="WP_009872359.1">
    <property type="nucleotide sequence ID" value="NC_000117.1"/>
</dbReference>
<dbReference type="FunCoup" id="O84075">
    <property type="interactions" value="244"/>
</dbReference>
<dbReference type="STRING" id="272561.CT_072"/>
<dbReference type="EnsemblBacteria" id="AAC67663">
    <property type="protein sequence ID" value="AAC67663"/>
    <property type="gene ID" value="CT_072"/>
</dbReference>
<dbReference type="KEGG" id="ctr:CT_072"/>
<dbReference type="PATRIC" id="fig|272561.5.peg.81"/>
<dbReference type="HOGENOM" id="CLU_025778_0_0_0"/>
<dbReference type="InParanoid" id="O84075"/>
<dbReference type="OrthoDB" id="9782003at2"/>
<dbReference type="Proteomes" id="UP000000431">
    <property type="component" value="Chromosome"/>
</dbReference>
<dbReference type="GO" id="GO:0005886">
    <property type="term" value="C:plasma membrane"/>
    <property type="evidence" value="ECO:0007669"/>
    <property type="project" value="UniProtKB-SubCell"/>
</dbReference>
<dbReference type="GO" id="GO:0046872">
    <property type="term" value="F:metal ion binding"/>
    <property type="evidence" value="ECO:0007669"/>
    <property type="project" value="UniProtKB-KW"/>
</dbReference>
<dbReference type="GO" id="GO:0004222">
    <property type="term" value="F:metalloendopeptidase activity"/>
    <property type="evidence" value="ECO:0007669"/>
    <property type="project" value="InterPro"/>
</dbReference>
<dbReference type="GO" id="GO:0006508">
    <property type="term" value="P:proteolysis"/>
    <property type="evidence" value="ECO:0007669"/>
    <property type="project" value="UniProtKB-KW"/>
</dbReference>
<dbReference type="CDD" id="cd06163">
    <property type="entry name" value="S2P-M50_PDZ_RseP-like"/>
    <property type="match status" value="1"/>
</dbReference>
<dbReference type="InterPro" id="IPR004387">
    <property type="entry name" value="Pept_M50_Zn"/>
</dbReference>
<dbReference type="InterPro" id="IPR008915">
    <property type="entry name" value="Peptidase_M50"/>
</dbReference>
<dbReference type="PANTHER" id="PTHR42837:SF2">
    <property type="entry name" value="MEMBRANE METALLOPROTEASE ARASP2, CHLOROPLASTIC-RELATED"/>
    <property type="match status" value="1"/>
</dbReference>
<dbReference type="PANTHER" id="PTHR42837">
    <property type="entry name" value="REGULATOR OF SIGMA-E PROTEASE RSEP"/>
    <property type="match status" value="1"/>
</dbReference>
<dbReference type="Pfam" id="PF02163">
    <property type="entry name" value="Peptidase_M50"/>
    <property type="match status" value="1"/>
</dbReference>
<dbReference type="PROSITE" id="PS00142">
    <property type="entry name" value="ZINC_PROTEASE"/>
    <property type="match status" value="1"/>
</dbReference>
<comment type="cofactor">
    <cofactor evidence="4">
        <name>Zn(2+)</name>
        <dbReference type="ChEBI" id="CHEBI:29105"/>
    </cofactor>
</comment>
<comment type="subcellular location">
    <subcellularLocation>
        <location evidence="1">Cell inner membrane</location>
        <topology evidence="1">Multi-pass membrane protein</topology>
    </subcellularLocation>
</comment>
<comment type="similarity">
    <text evidence="4">Belongs to the peptidase M50B family.</text>
</comment>
<evidence type="ECO:0000250" key="1"/>
<evidence type="ECO:0000255" key="2"/>
<evidence type="ECO:0000255" key="3">
    <source>
        <dbReference type="PROSITE-ProRule" id="PRU10095"/>
    </source>
</evidence>
<evidence type="ECO:0000305" key="4"/>
<gene>
    <name type="ordered locus">CT_072</name>
</gene>
<organism>
    <name type="scientific">Chlamydia trachomatis serovar D (strain ATCC VR-885 / DSM 19411 / UW-3/Cx)</name>
    <dbReference type="NCBI Taxonomy" id="272561"/>
    <lineage>
        <taxon>Bacteria</taxon>
        <taxon>Pseudomonadati</taxon>
        <taxon>Chlamydiota</taxon>
        <taxon>Chlamydiia</taxon>
        <taxon>Chlamydiales</taxon>
        <taxon>Chlamydiaceae</taxon>
        <taxon>Chlamydia/Chlamydophila group</taxon>
        <taxon>Chlamydia</taxon>
    </lineage>
</organism>
<keyword id="KW-0997">Cell inner membrane</keyword>
<keyword id="KW-1003">Cell membrane</keyword>
<keyword id="KW-0378">Hydrolase</keyword>
<keyword id="KW-0472">Membrane</keyword>
<keyword id="KW-0479">Metal-binding</keyword>
<keyword id="KW-0482">Metalloprotease</keyword>
<keyword id="KW-0645">Protease</keyword>
<keyword id="KW-1185">Reference proteome</keyword>
<keyword id="KW-0812">Transmembrane</keyword>
<keyword id="KW-1133">Transmembrane helix</keyword>
<keyword id="KW-0862">Zinc</keyword>
<sequence>MTIIYFVLAALALGFLILIHELGHLLAAKAVGMSVESFSIGFGPALVRKKMGSVEYRIGAIPFGGYVRIKGMDRNDKDNSGDKEKTVYDIPEGFFSKSPWKRIFVLAAGPLANLLVAIFVFGILYFSGGRTKSFSEYTSIVGWVHPSLEQQGLHAGDQIFFCNGQPYSGHKMAFSSSLLERKLSLQGQHPAYFSESEAFSLEAPFNPNMEGVPCLGASYLLYRGSDPLPEKSPLVDAGLSEGDRLVWMDGLLVFSGAQVSQMLNEKQSFLRVERQGKVVFVRQARVLAGDLTLTPYFKNELIDCQYEAGLKGKWASLYTLPYIINGDGFVESKVKLLNDERVSLDYNLELGDKIVAVDGIPVMSNADILRLVQDHRVSLIFQRMSPEQLTVLEQKAADQAFINSYDMDDLLRVAESVGEEREVSRLGDYRLVTRVQPRPWAHIYSEALLDKQRALASKFRDEQERRYYLERIEAEKQRISLGIPLKDLAVQYNPDPWVLMEESVSDSLKTVKALGMGRVSPQWLSGPVGIVRILHTGWSVGIPEALAWIGLISVNLAVLNLLPIPVLDGGYILLCLWEILSRRRLNMRLVEKALVPFMILLVLFFVFLTLQDLSRVFVG</sequence>
<accession>O84075</accession>
<feature type="chain" id="PRO_0000088437" description="Putative zinc metalloprotease CT_072">
    <location>
        <begin position="1"/>
        <end position="619"/>
    </location>
</feature>
<feature type="transmembrane region" description="Helical" evidence="2">
    <location>
        <begin position="103"/>
        <end position="125"/>
    </location>
</feature>
<feature type="transmembrane region" description="Helical" evidence="2">
    <location>
        <begin position="558"/>
        <end position="580"/>
    </location>
</feature>
<feature type="transmembrane region" description="Helical" evidence="2">
    <location>
        <begin position="593"/>
        <end position="610"/>
    </location>
</feature>
<feature type="active site" evidence="3">
    <location>
        <position position="21"/>
    </location>
</feature>
<feature type="binding site" evidence="3">
    <location>
        <position position="20"/>
    </location>
    <ligand>
        <name>Zn(2+)</name>
        <dbReference type="ChEBI" id="CHEBI:29105"/>
        <note>catalytic</note>
    </ligand>
</feature>
<feature type="binding site" evidence="3">
    <location>
        <position position="24"/>
    </location>
    <ligand>
        <name>Zn(2+)</name>
        <dbReference type="ChEBI" id="CHEBI:29105"/>
        <note>catalytic</note>
    </ligand>
</feature>
<protein>
    <recommendedName>
        <fullName>Putative zinc metalloprotease CT_072</fullName>
        <ecNumber>3.4.24.-</ecNumber>
    </recommendedName>
</protein>